<gene>
    <name evidence="1" type="primary">rnpA</name>
    <name type="ordered locus">BB_0441</name>
</gene>
<name>RNPA_BORBU</name>
<evidence type="ECO:0000255" key="1">
    <source>
        <dbReference type="HAMAP-Rule" id="MF_00227"/>
    </source>
</evidence>
<accession>P50069</accession>
<keyword id="KW-0255">Endonuclease</keyword>
<keyword id="KW-0378">Hydrolase</keyword>
<keyword id="KW-0540">Nuclease</keyword>
<keyword id="KW-1185">Reference proteome</keyword>
<keyword id="KW-0694">RNA-binding</keyword>
<keyword id="KW-0819">tRNA processing</keyword>
<protein>
    <recommendedName>
        <fullName evidence="1">Ribonuclease P protein component</fullName>
        <shortName evidence="1">RNase P protein</shortName>
        <shortName evidence="1">RNaseP protein</shortName>
        <ecNumber evidence="1">3.1.26.5</ecNumber>
    </recommendedName>
    <alternativeName>
        <fullName evidence="1">Protein C5</fullName>
    </alternativeName>
</protein>
<dbReference type="EC" id="3.1.26.5" evidence="1"/>
<dbReference type="EMBL" id="AE000783">
    <property type="protein sequence ID" value="AAB91511.1"/>
    <property type="molecule type" value="Genomic_DNA"/>
</dbReference>
<dbReference type="EMBL" id="U04527">
    <property type="protein sequence ID" value="AAA58945.1"/>
    <property type="molecule type" value="Genomic_DNA"/>
</dbReference>
<dbReference type="PIR" id="H70154">
    <property type="entry name" value="H70154"/>
</dbReference>
<dbReference type="RefSeq" id="NP_212575.1">
    <property type="nucleotide sequence ID" value="NC_001318.1"/>
</dbReference>
<dbReference type="RefSeq" id="WP_002664778.1">
    <property type="nucleotide sequence ID" value="NC_001318.1"/>
</dbReference>
<dbReference type="SMR" id="P50069"/>
<dbReference type="STRING" id="224326.BB_0441"/>
<dbReference type="PaxDb" id="224326-BB_0441"/>
<dbReference type="EnsemblBacteria" id="AAB91511">
    <property type="protein sequence ID" value="AAB91511"/>
    <property type="gene ID" value="BB_0441"/>
</dbReference>
<dbReference type="KEGG" id="bbu:BB_0441"/>
<dbReference type="PATRIC" id="fig|224326.49.peg.832"/>
<dbReference type="HOGENOM" id="CLU_2116283_0_0_12"/>
<dbReference type="OrthoDB" id="350607at2"/>
<dbReference type="Proteomes" id="UP000001807">
    <property type="component" value="Chromosome"/>
</dbReference>
<dbReference type="GO" id="GO:0030677">
    <property type="term" value="C:ribonuclease P complex"/>
    <property type="evidence" value="ECO:0007669"/>
    <property type="project" value="TreeGrafter"/>
</dbReference>
<dbReference type="GO" id="GO:0042781">
    <property type="term" value="F:3'-tRNA processing endoribonuclease activity"/>
    <property type="evidence" value="ECO:0007669"/>
    <property type="project" value="TreeGrafter"/>
</dbReference>
<dbReference type="GO" id="GO:0004526">
    <property type="term" value="F:ribonuclease P activity"/>
    <property type="evidence" value="ECO:0007669"/>
    <property type="project" value="UniProtKB-UniRule"/>
</dbReference>
<dbReference type="GO" id="GO:0000049">
    <property type="term" value="F:tRNA binding"/>
    <property type="evidence" value="ECO:0007669"/>
    <property type="project" value="UniProtKB-UniRule"/>
</dbReference>
<dbReference type="GO" id="GO:0001682">
    <property type="term" value="P:tRNA 5'-leader removal"/>
    <property type="evidence" value="ECO:0007669"/>
    <property type="project" value="UniProtKB-UniRule"/>
</dbReference>
<dbReference type="Gene3D" id="3.30.230.10">
    <property type="match status" value="1"/>
</dbReference>
<dbReference type="HAMAP" id="MF_00227">
    <property type="entry name" value="RNase_P"/>
    <property type="match status" value="1"/>
</dbReference>
<dbReference type="InterPro" id="IPR020568">
    <property type="entry name" value="Ribosomal_Su5_D2-typ_SF"/>
</dbReference>
<dbReference type="InterPro" id="IPR014721">
    <property type="entry name" value="Ribsml_uS5_D2-typ_fold_subgr"/>
</dbReference>
<dbReference type="InterPro" id="IPR000100">
    <property type="entry name" value="RNase_P"/>
</dbReference>
<dbReference type="NCBIfam" id="TIGR00188">
    <property type="entry name" value="rnpA"/>
    <property type="match status" value="1"/>
</dbReference>
<dbReference type="PANTHER" id="PTHR33992">
    <property type="entry name" value="RIBONUCLEASE P PROTEIN COMPONENT"/>
    <property type="match status" value="1"/>
</dbReference>
<dbReference type="PANTHER" id="PTHR33992:SF1">
    <property type="entry name" value="RIBONUCLEASE P PROTEIN COMPONENT"/>
    <property type="match status" value="1"/>
</dbReference>
<dbReference type="Pfam" id="PF00825">
    <property type="entry name" value="Ribonuclease_P"/>
    <property type="match status" value="1"/>
</dbReference>
<dbReference type="SUPFAM" id="SSF54211">
    <property type="entry name" value="Ribosomal protein S5 domain 2-like"/>
    <property type="match status" value="1"/>
</dbReference>
<organism>
    <name type="scientific">Borreliella burgdorferi (strain ATCC 35210 / DSM 4680 / CIP 102532 / B31)</name>
    <name type="common">Borrelia burgdorferi</name>
    <dbReference type="NCBI Taxonomy" id="224326"/>
    <lineage>
        <taxon>Bacteria</taxon>
        <taxon>Pseudomonadati</taxon>
        <taxon>Spirochaetota</taxon>
        <taxon>Spirochaetia</taxon>
        <taxon>Spirochaetales</taxon>
        <taxon>Borreliaceae</taxon>
        <taxon>Borreliella</taxon>
    </lineage>
</organism>
<feature type="chain" id="PRO_0000198429" description="Ribonuclease P protein component">
    <location>
        <begin position="1"/>
        <end position="119"/>
    </location>
</feature>
<proteinExistence type="inferred from homology"/>
<comment type="function">
    <text evidence="1">RNaseP catalyzes the removal of the 5'-leader sequence from pre-tRNA to produce the mature 5'-terminus. It can also cleave other RNA substrates such as 4.5S RNA. The protein component plays an auxiliary but essential role in vivo by binding to the 5'-leader sequence and broadening the substrate specificity of the ribozyme.</text>
</comment>
<comment type="catalytic activity">
    <reaction evidence="1">
        <text>Endonucleolytic cleavage of RNA, removing 5'-extranucleotides from tRNA precursor.</text>
        <dbReference type="EC" id="3.1.26.5"/>
    </reaction>
</comment>
<comment type="subunit">
    <text evidence="1">Consists of a catalytic RNA component (M1 or rnpB) and a protein subunit.</text>
</comment>
<comment type="similarity">
    <text evidence="1">Belongs to the RnpA family.</text>
</comment>
<sequence>MRKRNISLKSKIEIQKIFKEGKLIRFSNLNLKMFYKSNHLVYSRILVTFSKGFRGSVKRNRIRRLFKEAFRKRLELLEGIALDIIFVVSYGKLTLTYFSIESLMKGLVLRCERGIGESK</sequence>
<reference key="1">
    <citation type="journal article" date="1997" name="Nature">
        <title>Genomic sequence of a Lyme disease spirochaete, Borrelia burgdorferi.</title>
        <authorList>
            <person name="Fraser C.M."/>
            <person name="Casjens S."/>
            <person name="Huang W.M."/>
            <person name="Sutton G.G."/>
            <person name="Clayton R.A."/>
            <person name="Lathigra R."/>
            <person name="White O."/>
            <person name="Ketchum K.A."/>
            <person name="Dodson R.J."/>
            <person name="Hickey E.K."/>
            <person name="Gwinn M.L."/>
            <person name="Dougherty B.A."/>
            <person name="Tomb J.-F."/>
            <person name="Fleischmann R.D."/>
            <person name="Richardson D.L."/>
            <person name="Peterson J.D."/>
            <person name="Kerlavage A.R."/>
            <person name="Quackenbush J."/>
            <person name="Salzberg S.L."/>
            <person name="Hanson M."/>
            <person name="van Vugt R."/>
            <person name="Palmer N."/>
            <person name="Adams M.D."/>
            <person name="Gocayne J.D."/>
            <person name="Weidman J.F."/>
            <person name="Utterback T.R."/>
            <person name="Watthey L."/>
            <person name="McDonald L.A."/>
            <person name="Artiach P."/>
            <person name="Bowman C."/>
            <person name="Garland S.A."/>
            <person name="Fujii C."/>
            <person name="Cotton M.D."/>
            <person name="Horst K."/>
            <person name="Roberts K.M."/>
            <person name="Hatch B."/>
            <person name="Smith H.O."/>
            <person name="Venter J.C."/>
        </authorList>
    </citation>
    <scope>NUCLEOTIDE SEQUENCE [LARGE SCALE GENOMIC DNA]</scope>
    <source>
        <strain>ATCC 35210 / DSM 4680 / CIP 102532 / B31</strain>
    </source>
</reference>
<reference key="2">
    <citation type="journal article" date="1994" name="Microbiology">
        <title>Molecular biology of the Borrelia, bacteria with linear replicons.</title>
        <authorList>
            <person name="Saint-Girons I."/>
            <person name="Old I.G."/>
            <person name="Davidson B.E."/>
        </authorList>
    </citation>
    <scope>NUCLEOTIDE SEQUENCE [GENOMIC DNA] OF 1-45</scope>
    <source>
        <strain>212</strain>
    </source>
</reference>